<organism>
    <name type="scientific">Dictyostelium discoideum</name>
    <name type="common">Social amoeba</name>
    <dbReference type="NCBI Taxonomy" id="44689"/>
    <lineage>
        <taxon>Eukaryota</taxon>
        <taxon>Amoebozoa</taxon>
        <taxon>Evosea</taxon>
        <taxon>Eumycetozoa</taxon>
        <taxon>Dictyostelia</taxon>
        <taxon>Dictyosteliales</taxon>
        <taxon>Dictyosteliaceae</taxon>
        <taxon>Dictyostelium</taxon>
    </lineage>
</organism>
<reference key="1">
    <citation type="journal article" date="1990" name="Proc. Natl. Acad. Sci. U.S.A.">
        <title>A pair of tandemly repeated genes code for gp24, a putative adhesion protein of Dictyostelium discoideum.</title>
        <authorList>
            <person name="Loomis W.F."/>
            <person name="Fuller D.L."/>
        </authorList>
    </citation>
    <scope>NUCLEOTIDE SEQUENCE [GENOMIC DNA]</scope>
    <source>
        <strain>AX4</strain>
    </source>
</reference>
<reference key="2">
    <citation type="journal article" date="2002" name="Nature">
        <title>Sequence and analysis of chromosome 2 of Dictyostelium discoideum.</title>
        <authorList>
            <person name="Gloeckner G."/>
            <person name="Eichinger L."/>
            <person name="Szafranski K."/>
            <person name="Pachebat J.A."/>
            <person name="Bankier A.T."/>
            <person name="Dear P.H."/>
            <person name="Lehmann R."/>
            <person name="Baumgart C."/>
            <person name="Parra G."/>
            <person name="Abril J.F."/>
            <person name="Guigo R."/>
            <person name="Kumpf K."/>
            <person name="Tunggal B."/>
            <person name="Cox E.C."/>
            <person name="Quail M.A."/>
            <person name="Platzer M."/>
            <person name="Rosenthal A."/>
            <person name="Noegel A.A."/>
        </authorList>
    </citation>
    <scope>NUCLEOTIDE SEQUENCE [LARGE SCALE GENOMIC DNA]</scope>
    <source>
        <strain>AX4</strain>
    </source>
</reference>
<reference key="3">
    <citation type="journal article" date="2005" name="Nature">
        <title>The genome of the social amoeba Dictyostelium discoideum.</title>
        <authorList>
            <person name="Eichinger L."/>
            <person name="Pachebat J.A."/>
            <person name="Gloeckner G."/>
            <person name="Rajandream M.A."/>
            <person name="Sucgang R."/>
            <person name="Berriman M."/>
            <person name="Song J."/>
            <person name="Olsen R."/>
            <person name="Szafranski K."/>
            <person name="Xu Q."/>
            <person name="Tunggal B."/>
            <person name="Kummerfeld S."/>
            <person name="Madera M."/>
            <person name="Konfortov B.A."/>
            <person name="Rivero F."/>
            <person name="Bankier A.T."/>
            <person name="Lehmann R."/>
            <person name="Hamlin N."/>
            <person name="Davies R."/>
            <person name="Gaudet P."/>
            <person name="Fey P."/>
            <person name="Pilcher K."/>
            <person name="Chen G."/>
            <person name="Saunders D."/>
            <person name="Sodergren E.J."/>
            <person name="Davis P."/>
            <person name="Kerhornou A."/>
            <person name="Nie X."/>
            <person name="Hall N."/>
            <person name="Anjard C."/>
            <person name="Hemphill L."/>
            <person name="Bason N."/>
            <person name="Farbrother P."/>
            <person name="Desany B."/>
            <person name="Just E."/>
            <person name="Morio T."/>
            <person name="Rost R."/>
            <person name="Churcher C.M."/>
            <person name="Cooper J."/>
            <person name="Haydock S."/>
            <person name="van Driessche N."/>
            <person name="Cronin A."/>
            <person name="Goodhead I."/>
            <person name="Muzny D.M."/>
            <person name="Mourier T."/>
            <person name="Pain A."/>
            <person name="Lu M."/>
            <person name="Harper D."/>
            <person name="Lindsay R."/>
            <person name="Hauser H."/>
            <person name="James K.D."/>
            <person name="Quiles M."/>
            <person name="Madan Babu M."/>
            <person name="Saito T."/>
            <person name="Buchrieser C."/>
            <person name="Wardroper A."/>
            <person name="Felder M."/>
            <person name="Thangavelu M."/>
            <person name="Johnson D."/>
            <person name="Knights A."/>
            <person name="Loulseged H."/>
            <person name="Mungall K.L."/>
            <person name="Oliver K."/>
            <person name="Price C."/>
            <person name="Quail M.A."/>
            <person name="Urushihara H."/>
            <person name="Hernandez J."/>
            <person name="Rabbinowitsch E."/>
            <person name="Steffen D."/>
            <person name="Sanders M."/>
            <person name="Ma J."/>
            <person name="Kohara Y."/>
            <person name="Sharp S."/>
            <person name="Simmonds M.N."/>
            <person name="Spiegler S."/>
            <person name="Tivey A."/>
            <person name="Sugano S."/>
            <person name="White B."/>
            <person name="Walker D."/>
            <person name="Woodward J.R."/>
            <person name="Winckler T."/>
            <person name="Tanaka Y."/>
            <person name="Shaulsky G."/>
            <person name="Schleicher M."/>
            <person name="Weinstock G.M."/>
            <person name="Rosenthal A."/>
            <person name="Cox E.C."/>
            <person name="Chisholm R.L."/>
            <person name="Gibbs R.A."/>
            <person name="Loomis W.F."/>
            <person name="Platzer M."/>
            <person name="Kay R.R."/>
            <person name="Williams J.G."/>
            <person name="Dear P.H."/>
            <person name="Noegel A.A."/>
            <person name="Barrell B.G."/>
            <person name="Kuspa A."/>
        </authorList>
    </citation>
    <scope>NUCLEOTIDE SEQUENCE [LARGE SCALE GENOMIC DNA]</scope>
    <source>
        <strain>AX4</strain>
    </source>
</reference>
<name>CSBB_DICDI</name>
<evidence type="ECO:0000305" key="1"/>
<feature type="chain" id="PRO_0000087408" description="Glycoprotein 24B">
    <location>
        <begin position="1"/>
        <end position="103"/>
    </location>
</feature>
<protein>
    <recommendedName>
        <fullName>Glycoprotein 24B</fullName>
        <shortName>gp24B</shortName>
    </recommendedName>
    <alternativeName>
        <fullName>Contact site B protein B</fullName>
    </alternativeName>
</protein>
<dbReference type="EMBL" id="M27588">
    <property type="protein sequence ID" value="AAA33210.1"/>
    <property type="molecule type" value="Genomic_DNA"/>
</dbReference>
<dbReference type="EMBL" id="AAFI02000008">
    <property type="protein sequence ID" value="EAL70918.1"/>
    <property type="molecule type" value="Genomic_DNA"/>
</dbReference>
<dbReference type="PIR" id="B34862">
    <property type="entry name" value="B34862"/>
</dbReference>
<dbReference type="RefSeq" id="XP_644942.1">
    <property type="nucleotide sequence ID" value="XM_639850.1"/>
</dbReference>
<dbReference type="FunCoup" id="P16643">
    <property type="interactions" value="46"/>
</dbReference>
<dbReference type="STRING" id="44689.P16643"/>
<dbReference type="PaxDb" id="44689-DDB0185093"/>
<dbReference type="EnsemblProtists" id="EAL70918">
    <property type="protein sequence ID" value="EAL70918"/>
    <property type="gene ID" value="DDB_G0272562"/>
</dbReference>
<dbReference type="GeneID" id="8618621"/>
<dbReference type="KEGG" id="ddi:DDB_G0272562"/>
<dbReference type="dictyBase" id="DDB_G0272562">
    <property type="gene designation" value="csbB"/>
</dbReference>
<dbReference type="VEuPathDB" id="AmoebaDB:DDB_G0272562"/>
<dbReference type="HOGENOM" id="CLU_167198_0_0_1"/>
<dbReference type="InParanoid" id="P16643"/>
<dbReference type="PhylomeDB" id="P16643"/>
<dbReference type="PRO" id="PR:P16643"/>
<dbReference type="Proteomes" id="UP000002195">
    <property type="component" value="Chromosome 2"/>
</dbReference>
<dbReference type="GO" id="GO:0009986">
    <property type="term" value="C:cell surface"/>
    <property type="evidence" value="ECO:0007669"/>
    <property type="project" value="UniProtKB-SubCell"/>
</dbReference>
<dbReference type="GO" id="GO:0031012">
    <property type="term" value="C:extracellular matrix"/>
    <property type="evidence" value="ECO:0007005"/>
    <property type="project" value="dictyBase"/>
</dbReference>
<dbReference type="GO" id="GO:0098609">
    <property type="term" value="P:cell-cell adhesion"/>
    <property type="evidence" value="ECO:0000304"/>
    <property type="project" value="dictyBase"/>
</dbReference>
<dbReference type="GO" id="GO:0031154">
    <property type="term" value="P:culmination involved in sorocarp development"/>
    <property type="evidence" value="ECO:0000316"/>
    <property type="project" value="dictyBase"/>
</dbReference>
<dbReference type="GO" id="GO:0006974">
    <property type="term" value="P:DNA damage response"/>
    <property type="evidence" value="ECO:0000316"/>
    <property type="project" value="dictyBase"/>
</dbReference>
<dbReference type="InterPro" id="IPR008601">
    <property type="entry name" value="Dicty_CAD"/>
</dbReference>
<dbReference type="Pfam" id="PF05720">
    <property type="entry name" value="Dicty_CAD"/>
    <property type="match status" value="1"/>
</dbReference>
<gene>
    <name type="primary">csbB</name>
    <name type="ORF">DDB_G0272562</name>
</gene>
<proteinExistence type="evidence at transcript level"/>
<keyword id="KW-0130">Cell adhesion</keyword>
<keyword id="KW-0325">Glycoprotein</keyword>
<keyword id="KW-1185">Reference proteome</keyword>
<sequence length="103" mass="11805">MTDLKITLVNEDGESTISGKGHPLPAPLIFPPIYCFCFIQYKTEGKLWDKNDFQIKSGKIEFGGEEYDITESKGTWSKDDEENHIKVSLHLIVPPKKIFQKNF</sequence>
<comment type="function">
    <text>Cell-cell adhesion during early development.</text>
</comment>
<comment type="subcellular location">
    <subcellularLocation>
        <location>Cell surface</location>
    </subcellularLocation>
</comment>
<comment type="developmental stage">
    <text>Plays an essential role during early development.</text>
</comment>
<comment type="PTM">
    <text>O-glycosylated.</text>
</comment>
<comment type="similarity">
    <text evidence="1">Belongs to the csb family.</text>
</comment>
<accession>P16643</accession>
<accession>Q558X4</accession>
<accession>Q86B15</accession>